<reference key="1">
    <citation type="journal article" date="1994" name="Gene">
        <title>The mouse Rxrb gene encoding RXR beta: genomic organization and two mRNA isoforms generated by alternative splicing of transcripts initiated from CpG island promoters.</title>
        <authorList>
            <person name="Nagata T."/>
            <person name="Kanno Y."/>
            <person name="Ozato K."/>
            <person name="Taketo M."/>
        </authorList>
    </citation>
    <scope>NUCLEOTIDE SEQUENCE [GENOMIC DNA]</scope>
    <scope>ALTERNATIVE SPLICING</scope>
    <scope>TISSUE SPECIFICITY</scope>
    <source>
        <strain>BALB/cJ</strain>
        <tissue>Liver</tissue>
    </source>
</reference>
<reference key="2">
    <citation type="submission" date="1998-10" db="EMBL/GenBank/DDBJ databases">
        <title>Sequence of the mouse major histocomaptibility locus class II region.</title>
        <authorList>
            <person name="Rowen L."/>
            <person name="Qin S."/>
            <person name="Madan A."/>
            <person name="Loretz C."/>
            <person name="James R."/>
            <person name="Dors M."/>
            <person name="Mix L."/>
            <person name="Hall J."/>
            <person name="Lasky S."/>
            <person name="Hood L."/>
        </authorList>
    </citation>
    <scope>NUCLEOTIDE SEQUENCE [LARGE SCALE GENOMIC DNA]</scope>
    <source>
        <strain>129/SvJ</strain>
    </source>
</reference>
<reference key="3">
    <citation type="journal article" date="2004" name="Genome Res.">
        <title>The status, quality, and expansion of the NIH full-length cDNA project: the Mammalian Gene Collection (MGC).</title>
        <authorList>
            <consortium name="The MGC Project Team"/>
        </authorList>
    </citation>
    <scope>NUCLEOTIDE SEQUENCE [LARGE SCALE MRNA] (ISOFORM LONG)</scope>
    <source>
        <tissue>Limb</tissue>
    </source>
</reference>
<reference key="4">
    <citation type="journal article" date="1992" name="Cell">
        <title>Purification, cloning, and RXR identity of the HeLa cell factor with which RAR or TR heterodimerizes to bind target sequences efficiently.</title>
        <authorList>
            <person name="Leid M."/>
            <person name="Kastner P."/>
            <person name="Lyons R."/>
            <person name="Nakshatri H."/>
            <person name="Saunders M."/>
            <person name="Zacharewsi T."/>
            <person name="Chen J.Y."/>
            <person name="Staub A."/>
            <person name="Garnier J.-M."/>
            <person name="Mader S."/>
            <person name="Chambon P."/>
        </authorList>
    </citation>
    <scope>NUCLEOTIDE SEQUENCE [MRNA] OF 73-520 (ISOFORM LONG)</scope>
    <scope>FUNCTION</scope>
    <source>
        <tissue>Embryo</tissue>
    </source>
</reference>
<reference key="5">
    <citation type="journal article" date="1989" name="Proc. Natl. Acad. Sci. U.S.A.">
        <title>H-2RIIBP, a member of the nuclear hormone receptor superfamily that binds to both the regulatory element of major histocompatibility class I genes and the estrogen response element.</title>
        <authorList>
            <person name="Hamada K."/>
            <person name="Gleason S.L."/>
            <person name="Levi B.-Z."/>
            <person name="Hirschfeld S."/>
            <person name="Appella E."/>
            <person name="Ozato K."/>
        </authorList>
    </citation>
    <scope>NUCLEOTIDE SEQUENCE [MRNA] OF 75-520 (ISOFORM LONG)</scope>
    <source>
        <tissue>Liver</tissue>
    </source>
</reference>
<reference key="6">
    <citation type="journal article" date="1992" name="Genes Dev.">
        <title>Characterization of three RXR genes that mediate the action of 9-cis retinoic acid.</title>
        <authorList>
            <person name="Mangelsdorf D.J."/>
            <person name="Borgmeyer U."/>
            <person name="Heyman R.A."/>
            <person name="Zhou J.Y."/>
            <person name="Ong E.S."/>
            <person name="Oro A.E."/>
            <person name="Kakizuka A."/>
            <person name="Evans R.M."/>
        </authorList>
    </citation>
    <scope>NUCLEOTIDE SEQUENCE (ISOFORM SHORT)</scope>
    <scope>FUNCTION</scope>
    <scope>TISSUE SPECIFICITY</scope>
    <scope>DOMAIN</scope>
    <source>
        <tissue>Liver</tissue>
    </source>
</reference>
<reference key="7">
    <citation type="journal article" date="2010" name="J. Biol. Chem.">
        <title>The Rho guanine nucleotide exchange factor AKAP13 (BRX) is essential for cardiac development in mice.</title>
        <authorList>
            <person name="Mayers C.M."/>
            <person name="Wadell J."/>
            <person name="McLean K."/>
            <person name="Venere M."/>
            <person name="Malik M."/>
            <person name="Shibata T."/>
            <person name="Driggers P.H."/>
            <person name="Kino T."/>
            <person name="Guo X.C."/>
            <person name="Koide H."/>
            <person name="Gorivodsky M."/>
            <person name="Grinberg A."/>
            <person name="Mukhopadhyay M."/>
            <person name="Abu-Asab M."/>
            <person name="Westphal H."/>
            <person name="Segars J.H."/>
        </authorList>
    </citation>
    <scope>INTERACTION WITH AKAP13</scope>
</reference>
<name>RXRB_MOUSE</name>
<gene>
    <name type="primary">Rxrb</name>
    <name type="synonym">Nr2b2</name>
</gene>
<feature type="chain" id="PRO_0000053573" description="Retinoic acid receptor RXR-beta">
    <location>
        <begin position="1"/>
        <end position="520"/>
    </location>
</feature>
<feature type="domain" description="NR LBD" evidence="4">
    <location>
        <begin position="283"/>
        <end position="516"/>
    </location>
</feature>
<feature type="DNA-binding region" description="Nuclear receptor" evidence="3">
    <location>
        <begin position="192"/>
        <end position="257"/>
    </location>
</feature>
<feature type="zinc finger region" description="NR C4-type" evidence="3">
    <location>
        <begin position="192"/>
        <end position="212"/>
    </location>
</feature>
<feature type="zinc finger region" description="NR C4-type" evidence="3">
    <location>
        <begin position="228"/>
        <end position="252"/>
    </location>
</feature>
<feature type="region of interest" description="Modulating" evidence="1">
    <location>
        <begin position="1"/>
        <end position="191"/>
    </location>
</feature>
<feature type="region of interest" description="Disordered" evidence="5">
    <location>
        <begin position="1"/>
        <end position="167"/>
    </location>
</feature>
<feature type="region of interest" description="Hinge">
    <location>
        <begin position="258"/>
        <end position="382"/>
    </location>
</feature>
<feature type="region of interest" description="Disordered" evidence="5">
    <location>
        <begin position="263"/>
        <end position="285"/>
    </location>
</feature>
<feature type="region of interest" description="Disordered" evidence="5">
    <location>
        <begin position="300"/>
        <end position="323"/>
    </location>
</feature>
<feature type="compositionally biased region" description="Basic and acidic residues" evidence="5">
    <location>
        <begin position="64"/>
        <end position="79"/>
    </location>
</feature>
<feature type="compositionally biased region" description="Pro residues" evidence="5">
    <location>
        <begin position="95"/>
        <end position="118"/>
    </location>
</feature>
<feature type="compositionally biased region" description="Low complexity" evidence="5">
    <location>
        <begin position="119"/>
        <end position="130"/>
    </location>
</feature>
<feature type="compositionally biased region" description="Pro residues" evidence="5">
    <location>
        <begin position="131"/>
        <end position="140"/>
    </location>
</feature>
<feature type="compositionally biased region" description="Basic and acidic residues" evidence="5">
    <location>
        <begin position="263"/>
        <end position="275"/>
    </location>
</feature>
<feature type="compositionally biased region" description="Gly residues" evidence="5">
    <location>
        <begin position="307"/>
        <end position="317"/>
    </location>
</feature>
<feature type="modified residue" description="Omega-N-methylarginine" evidence="2">
    <location>
        <position position="25"/>
    </location>
</feature>
<feature type="splice variant" id="VSP_003678" description="In isoform Short." evidence="10">
    <location>
        <begin position="1"/>
        <end position="110"/>
    </location>
</feature>
<feature type="sequence conflict" description="In Ref. 4; AAA40081." evidence="10" ref="4">
    <original>SGR</original>
    <variation>MGP</variation>
    <location>
        <begin position="73"/>
        <end position="75"/>
    </location>
</feature>
<feature type="sequence conflict" description="In Ref. 5; AAA37772." evidence="10" ref="5">
    <original>RDS</original>
    <variation>EFP</variation>
    <location>
        <begin position="75"/>
        <end position="77"/>
    </location>
</feature>
<feature type="sequence conflict" description="In Ref. 4; AAA40081." evidence="10" ref="4">
    <original>L</original>
    <variation>M</variation>
    <location>
        <position position="433"/>
    </location>
</feature>
<accession>P28704</accession>
<accession>P33243</accession>
<dbReference type="EMBL" id="D21831">
    <property type="protein sequence ID" value="BAA04858.1"/>
    <property type="molecule type" value="Genomic_DNA"/>
</dbReference>
<dbReference type="EMBL" id="D21831">
    <property type="protein sequence ID" value="BAA04859.1"/>
    <property type="molecule type" value="Genomic_DNA"/>
</dbReference>
<dbReference type="EMBL" id="AF100956">
    <property type="protein sequence ID" value="AAC69904.1"/>
    <property type="molecule type" value="Genomic_DNA"/>
</dbReference>
<dbReference type="EMBL" id="BC049773">
    <property type="protein sequence ID" value="AAH49773.1"/>
    <property type="molecule type" value="mRNA"/>
</dbReference>
<dbReference type="EMBL" id="M84818">
    <property type="protein sequence ID" value="AAA40081.2"/>
    <property type="molecule type" value="mRNA"/>
</dbReference>
<dbReference type="EMBL" id="M26804">
    <property type="protein sequence ID" value="AAA37772.1"/>
    <property type="molecule type" value="mRNA"/>
</dbReference>
<dbReference type="EMBL" id="X66224">
    <property type="protein sequence ID" value="CAA46963.1"/>
    <property type="molecule type" value="mRNA"/>
</dbReference>
<dbReference type="CCDS" id="CCDS57068.1">
    <molecule id="P28704-2"/>
</dbReference>
<dbReference type="CCDS" id="CCDS89073.1">
    <molecule id="P28704-1"/>
</dbReference>
<dbReference type="PIR" id="A34418">
    <property type="entry name" value="A34418"/>
</dbReference>
<dbReference type="PIR" id="D41727">
    <property type="entry name" value="D41727"/>
</dbReference>
<dbReference type="PIR" id="I84718">
    <property type="entry name" value="I84718"/>
</dbReference>
<dbReference type="PIR" id="S26669">
    <property type="entry name" value="S26669"/>
</dbReference>
<dbReference type="RefSeq" id="NP_001192145.1">
    <molecule id="P28704-2"/>
    <property type="nucleotide sequence ID" value="NM_001205216.1"/>
</dbReference>
<dbReference type="RefSeq" id="NP_035436.1">
    <molecule id="P28704-1"/>
    <property type="nucleotide sequence ID" value="NM_011306.4"/>
</dbReference>
<dbReference type="SMR" id="P28704"/>
<dbReference type="BioGRID" id="203039">
    <property type="interactions" value="2"/>
</dbReference>
<dbReference type="ComplexPortal" id="CPX-706">
    <property type="entry name" value="RXRbeta-LXRbeta nuclear hormone receptor complex"/>
</dbReference>
<dbReference type="ComplexPortal" id="CPX-717">
    <property type="entry name" value="RXRbeta-LXRalpha nuclear hormone receptor complex"/>
</dbReference>
<dbReference type="ComplexPortal" id="CPX-872">
    <property type="entry name" value="RXRbeta-VDR nuclear hormone receptor complex"/>
</dbReference>
<dbReference type="CORUM" id="P28704"/>
<dbReference type="FunCoup" id="P28704">
    <property type="interactions" value="3762"/>
</dbReference>
<dbReference type="IntAct" id="P28704">
    <property type="interactions" value="1"/>
</dbReference>
<dbReference type="STRING" id="10090.ENSMUSP00000036585"/>
<dbReference type="BindingDB" id="P28704"/>
<dbReference type="ChEMBL" id="CHEMBL4047"/>
<dbReference type="DrugCentral" id="P28704"/>
<dbReference type="GuidetoPHARMACOLOGY" id="611"/>
<dbReference type="GlyGen" id="P28704">
    <property type="glycosylation" value="1 site, 1 O-linked glycan (1 site)"/>
</dbReference>
<dbReference type="iPTMnet" id="P28704"/>
<dbReference type="PhosphoSitePlus" id="P28704"/>
<dbReference type="PaxDb" id="10090-ENSMUSP00000036585"/>
<dbReference type="PeptideAtlas" id="P28704"/>
<dbReference type="ProteomicsDB" id="256850">
    <molecule id="P28704-1"/>
</dbReference>
<dbReference type="ProteomicsDB" id="256851">
    <molecule id="P28704-2"/>
</dbReference>
<dbReference type="Pumba" id="P28704"/>
<dbReference type="Antibodypedia" id="28936">
    <property type="antibodies" value="340 antibodies from 42 providers"/>
</dbReference>
<dbReference type="DNASU" id="20182"/>
<dbReference type="Ensembl" id="ENSMUST00000116612.3">
    <molecule id="P28704-2"/>
    <property type="protein sequence ID" value="ENSMUSP00000112311.3"/>
    <property type="gene ID" value="ENSMUSG00000039656.18"/>
</dbReference>
<dbReference type="Ensembl" id="ENSMUST00000174299.9">
    <molecule id="P28704-1"/>
    <property type="protein sequence ID" value="ENSMUSP00000133775.4"/>
    <property type="gene ID" value="ENSMUSG00000039656.18"/>
</dbReference>
<dbReference type="GeneID" id="20182"/>
<dbReference type="KEGG" id="mmu:20182"/>
<dbReference type="UCSC" id="uc008cax.2">
    <molecule id="P28704-1"/>
    <property type="organism name" value="mouse"/>
</dbReference>
<dbReference type="AGR" id="MGI:98215"/>
<dbReference type="CTD" id="6257"/>
<dbReference type="MGI" id="MGI:98215">
    <property type="gene designation" value="Rxrb"/>
</dbReference>
<dbReference type="VEuPathDB" id="HostDB:ENSMUSG00000039656"/>
<dbReference type="eggNOG" id="KOG3575">
    <property type="taxonomic scope" value="Eukaryota"/>
</dbReference>
<dbReference type="GeneTree" id="ENSGT00940000159208"/>
<dbReference type="HOGENOM" id="CLU_007368_5_4_1"/>
<dbReference type="InParanoid" id="P28704"/>
<dbReference type="OrthoDB" id="5873264at2759"/>
<dbReference type="PhylomeDB" id="P28704"/>
<dbReference type="Reactome" id="R-MMU-383280">
    <property type="pathway name" value="Nuclear Receptor transcription pathway"/>
</dbReference>
<dbReference type="Reactome" id="R-MMU-5362517">
    <property type="pathway name" value="Signaling by Retinoic Acid"/>
</dbReference>
<dbReference type="Reactome" id="R-MMU-9029569">
    <property type="pathway name" value="NR1H3 &amp; NR1H2 regulate gene expression linked to cholesterol transport and efflux"/>
</dbReference>
<dbReference type="Reactome" id="R-MMU-9623433">
    <property type="pathway name" value="NR1H2 &amp; NR1H3 regulate gene expression to control bile acid homeostasis"/>
</dbReference>
<dbReference type="BioGRID-ORCS" id="20182">
    <property type="hits" value="7 hits in 84 CRISPR screens"/>
</dbReference>
<dbReference type="ChiTaRS" id="Rxrb">
    <property type="organism name" value="mouse"/>
</dbReference>
<dbReference type="PRO" id="PR:P28704"/>
<dbReference type="Proteomes" id="UP000000589">
    <property type="component" value="Chromosome 17"/>
</dbReference>
<dbReference type="RNAct" id="P28704">
    <property type="molecule type" value="protein"/>
</dbReference>
<dbReference type="Bgee" id="ENSMUSG00000039656">
    <property type="expression patterns" value="Expressed in ileal epithelium and 270 other cell types or tissues"/>
</dbReference>
<dbReference type="ExpressionAtlas" id="P28704">
    <property type="expression patterns" value="baseline and differential"/>
</dbReference>
<dbReference type="GO" id="GO:0005829">
    <property type="term" value="C:cytosol"/>
    <property type="evidence" value="ECO:0007669"/>
    <property type="project" value="Ensembl"/>
</dbReference>
<dbReference type="GO" id="GO:0005730">
    <property type="term" value="C:nucleolus"/>
    <property type="evidence" value="ECO:0007669"/>
    <property type="project" value="Ensembl"/>
</dbReference>
<dbReference type="GO" id="GO:0005654">
    <property type="term" value="C:nucleoplasm"/>
    <property type="evidence" value="ECO:0007669"/>
    <property type="project" value="Ensembl"/>
</dbReference>
<dbReference type="GO" id="GO:0090575">
    <property type="term" value="C:RNA polymerase II transcription regulator complex"/>
    <property type="evidence" value="ECO:0000266"/>
    <property type="project" value="ComplexPortal"/>
</dbReference>
<dbReference type="GO" id="GO:0031490">
    <property type="term" value="F:chromatin DNA binding"/>
    <property type="evidence" value="ECO:0000314"/>
    <property type="project" value="MGI"/>
</dbReference>
<dbReference type="GO" id="GO:0001228">
    <property type="term" value="F:DNA-binding transcription activator activity, RNA polymerase II-specific"/>
    <property type="evidence" value="ECO:0007669"/>
    <property type="project" value="Ensembl"/>
</dbReference>
<dbReference type="GO" id="GO:0042802">
    <property type="term" value="F:identical protein binding"/>
    <property type="evidence" value="ECO:0000353"/>
    <property type="project" value="MGI"/>
</dbReference>
<dbReference type="GO" id="GO:0004879">
    <property type="term" value="F:nuclear receptor activity"/>
    <property type="evidence" value="ECO:0000314"/>
    <property type="project" value="MGI"/>
</dbReference>
<dbReference type="GO" id="GO:0003707">
    <property type="term" value="F:nuclear steroid receptor activity"/>
    <property type="evidence" value="ECO:0007669"/>
    <property type="project" value="InterPro"/>
</dbReference>
<dbReference type="GO" id="GO:0000978">
    <property type="term" value="F:RNA polymerase II cis-regulatory region sequence-specific DNA binding"/>
    <property type="evidence" value="ECO:0000314"/>
    <property type="project" value="MGI"/>
</dbReference>
<dbReference type="GO" id="GO:0000977">
    <property type="term" value="F:RNA polymerase II transcription regulatory region sequence-specific DNA binding"/>
    <property type="evidence" value="ECO:0000314"/>
    <property type="project" value="MGI"/>
</dbReference>
<dbReference type="GO" id="GO:0043565">
    <property type="term" value="F:sequence-specific DNA binding"/>
    <property type="evidence" value="ECO:0000316"/>
    <property type="project" value="MGI"/>
</dbReference>
<dbReference type="GO" id="GO:0000976">
    <property type="term" value="F:transcription cis-regulatory region binding"/>
    <property type="evidence" value="ECO:0000314"/>
    <property type="project" value="UniProtKB"/>
</dbReference>
<dbReference type="GO" id="GO:0008270">
    <property type="term" value="F:zinc ion binding"/>
    <property type="evidence" value="ECO:0007669"/>
    <property type="project" value="UniProtKB-KW"/>
</dbReference>
<dbReference type="GO" id="GO:0060038">
    <property type="term" value="P:cardiac muscle cell proliferation"/>
    <property type="evidence" value="ECO:0000316"/>
    <property type="project" value="MGI"/>
</dbReference>
<dbReference type="GO" id="GO:0071300">
    <property type="term" value="P:cellular response to retinoic acid"/>
    <property type="evidence" value="ECO:0000314"/>
    <property type="project" value="UniProtKB"/>
</dbReference>
<dbReference type="GO" id="GO:0009755">
    <property type="term" value="P:hormone-mediated signaling pathway"/>
    <property type="evidence" value="ECO:0000250"/>
    <property type="project" value="ComplexPortal"/>
</dbReference>
<dbReference type="GO" id="GO:0001701">
    <property type="term" value="P:in utero embryonic development"/>
    <property type="evidence" value="ECO:0000316"/>
    <property type="project" value="MGI"/>
</dbReference>
<dbReference type="GO" id="GO:0001893">
    <property type="term" value="P:maternal placenta development"/>
    <property type="evidence" value="ECO:0000316"/>
    <property type="project" value="MGI"/>
</dbReference>
<dbReference type="GO" id="GO:0042789">
    <property type="term" value="P:mRNA transcription by RNA polymerase II"/>
    <property type="evidence" value="ECO:0000250"/>
    <property type="project" value="ComplexPortal"/>
</dbReference>
<dbReference type="GO" id="GO:0030501">
    <property type="term" value="P:positive regulation of bone mineralization"/>
    <property type="evidence" value="ECO:0000303"/>
    <property type="project" value="ComplexPortal"/>
</dbReference>
<dbReference type="GO" id="GO:0045944">
    <property type="term" value="P:positive regulation of transcription by RNA polymerase II"/>
    <property type="evidence" value="ECO:0000316"/>
    <property type="project" value="MGI"/>
</dbReference>
<dbReference type="GO" id="GO:0070564">
    <property type="term" value="P:positive regulation of vitamin D receptor signaling pathway"/>
    <property type="evidence" value="ECO:0000250"/>
    <property type="project" value="ComplexPortal"/>
</dbReference>
<dbReference type="GO" id="GO:0048384">
    <property type="term" value="P:retinoic acid receptor signaling pathway"/>
    <property type="evidence" value="ECO:0000314"/>
    <property type="project" value="MGI"/>
</dbReference>
<dbReference type="GO" id="GO:0055012">
    <property type="term" value="P:ventricular cardiac muscle cell differentiation"/>
    <property type="evidence" value="ECO:0000315"/>
    <property type="project" value="MGI"/>
</dbReference>
<dbReference type="CDD" id="cd06956">
    <property type="entry name" value="NR_DBD_RXR"/>
    <property type="match status" value="1"/>
</dbReference>
<dbReference type="CDD" id="cd06943">
    <property type="entry name" value="NR_LBD_RXR_like"/>
    <property type="match status" value="1"/>
</dbReference>
<dbReference type="FunFam" id="1.10.565.10:FF:000002">
    <property type="entry name" value="Retinoic acid receptor RXR-alpha"/>
    <property type="match status" value="1"/>
</dbReference>
<dbReference type="FunFam" id="3.30.50.10:FF:000005">
    <property type="entry name" value="Retinoic acid receptor RXR-alpha"/>
    <property type="match status" value="1"/>
</dbReference>
<dbReference type="Gene3D" id="3.30.50.10">
    <property type="entry name" value="Erythroid Transcription Factor GATA-1, subunit A"/>
    <property type="match status" value="1"/>
</dbReference>
<dbReference type="Gene3D" id="1.10.565.10">
    <property type="entry name" value="Retinoid X Receptor"/>
    <property type="match status" value="1"/>
</dbReference>
<dbReference type="InterPro" id="IPR035500">
    <property type="entry name" value="NHR-like_dom_sf"/>
</dbReference>
<dbReference type="InterPro" id="IPR000536">
    <property type="entry name" value="Nucl_hrmn_rcpt_lig-bd"/>
</dbReference>
<dbReference type="InterPro" id="IPR050274">
    <property type="entry name" value="Nuclear_hormone_rcpt_NR2"/>
</dbReference>
<dbReference type="InterPro" id="IPR001723">
    <property type="entry name" value="Nuclear_hrmn_rcpt"/>
</dbReference>
<dbReference type="InterPro" id="IPR000003">
    <property type="entry name" value="Retinoid-X_rcpt/HNF4"/>
</dbReference>
<dbReference type="InterPro" id="IPR001628">
    <property type="entry name" value="Znf_hrmn_rcpt"/>
</dbReference>
<dbReference type="InterPro" id="IPR013088">
    <property type="entry name" value="Znf_NHR/GATA"/>
</dbReference>
<dbReference type="PANTHER" id="PTHR24083">
    <property type="entry name" value="NUCLEAR HORMONE RECEPTOR"/>
    <property type="match status" value="1"/>
</dbReference>
<dbReference type="Pfam" id="PF00104">
    <property type="entry name" value="Hormone_recep"/>
    <property type="match status" value="1"/>
</dbReference>
<dbReference type="Pfam" id="PF00105">
    <property type="entry name" value="zf-C4"/>
    <property type="match status" value="1"/>
</dbReference>
<dbReference type="PRINTS" id="PR00545">
    <property type="entry name" value="RETINOIDXR"/>
</dbReference>
<dbReference type="PRINTS" id="PR00398">
    <property type="entry name" value="STRDHORMONER"/>
</dbReference>
<dbReference type="PRINTS" id="PR00047">
    <property type="entry name" value="STROIDFINGER"/>
</dbReference>
<dbReference type="SMART" id="SM00430">
    <property type="entry name" value="HOLI"/>
    <property type="match status" value="1"/>
</dbReference>
<dbReference type="SMART" id="SM00399">
    <property type="entry name" value="ZnF_C4"/>
    <property type="match status" value="1"/>
</dbReference>
<dbReference type="SUPFAM" id="SSF57716">
    <property type="entry name" value="Glucocorticoid receptor-like (DNA-binding domain)"/>
    <property type="match status" value="1"/>
</dbReference>
<dbReference type="SUPFAM" id="SSF48508">
    <property type="entry name" value="Nuclear receptor ligand-binding domain"/>
    <property type="match status" value="1"/>
</dbReference>
<dbReference type="PROSITE" id="PS51843">
    <property type="entry name" value="NR_LBD"/>
    <property type="match status" value="1"/>
</dbReference>
<dbReference type="PROSITE" id="PS00031">
    <property type="entry name" value="NUCLEAR_REC_DBD_1"/>
    <property type="match status" value="1"/>
</dbReference>
<dbReference type="PROSITE" id="PS51030">
    <property type="entry name" value="NUCLEAR_REC_DBD_2"/>
    <property type="match status" value="1"/>
</dbReference>
<comment type="function">
    <text evidence="6 7">Receptor for retinoic acid. Retinoic acid receptors bind as heterodimers to their target response elements in response to their ligands, all-trans or 9-cis retinoic acid, and regulate gene expression in various biological processes. The RAR/RXR heterodimers bind to the retinoic acid response elements (RARE).</text>
</comment>
<comment type="subunit">
    <text evidence="2 8">Homodimer (in vitro). Heterodimer with other retinoic acid receptor family members. Binds DNA preferentially as a RAR/RXR heterodimer. Interacts with NR1H3 (By similarity). Interacts with AKAP13 (PubMed:20139090).</text>
</comment>
<comment type="subcellular location">
    <subcellularLocation>
        <location evidence="2">Nucleus</location>
    </subcellularLocation>
    <subcellularLocation>
        <location evidence="2">Cytoplasm</location>
    </subcellularLocation>
</comment>
<comment type="alternative products">
    <event type="alternative splicing"/>
    <isoform>
        <id>P28704-1</id>
        <name>Long</name>
        <sequence type="displayed"/>
    </isoform>
    <isoform>
        <id>P28704-2</id>
        <name>Short</name>
        <sequence type="described" ref="VSP_003678"/>
    </isoform>
    <text>Additional isoforms seem to exist.</text>
</comment>
<comment type="tissue specificity">
    <text evidence="7 9">In all tissues tested, including brain, thymus, spleen and liver.</text>
</comment>
<comment type="domain">
    <text evidence="11">Composed of three domains: a modulating N-terminal domain, a DNA-binding domain and a C-terminal ligand-binding domain.</text>
</comment>
<comment type="similarity">
    <text evidence="10">Belongs to the nuclear hormone receptor family. NR2 subfamily.</text>
</comment>
<organism>
    <name type="scientific">Mus musculus</name>
    <name type="common">Mouse</name>
    <dbReference type="NCBI Taxonomy" id="10090"/>
    <lineage>
        <taxon>Eukaryota</taxon>
        <taxon>Metazoa</taxon>
        <taxon>Chordata</taxon>
        <taxon>Craniata</taxon>
        <taxon>Vertebrata</taxon>
        <taxon>Euteleostomi</taxon>
        <taxon>Mammalia</taxon>
        <taxon>Eutheria</taxon>
        <taxon>Euarchontoglires</taxon>
        <taxon>Glires</taxon>
        <taxon>Rodentia</taxon>
        <taxon>Myomorpha</taxon>
        <taxon>Muroidea</taxon>
        <taxon>Muridae</taxon>
        <taxon>Murinae</taxon>
        <taxon>Mus</taxon>
        <taxon>Mus</taxon>
    </lineage>
</organism>
<proteinExistence type="evidence at protein level"/>
<protein>
    <recommendedName>
        <fullName>Retinoic acid receptor RXR-beta</fullName>
    </recommendedName>
    <alternativeName>
        <fullName>MHC class I regulatory element-binding protein H-2RIIBP</fullName>
    </alternativeName>
    <alternativeName>
        <fullName>Nuclear receptor subfamily 2 group B member 2</fullName>
    </alternativeName>
    <alternativeName>
        <fullName>Retinoid X receptor beta</fullName>
    </alternativeName>
</protein>
<keyword id="KW-0025">Alternative splicing</keyword>
<keyword id="KW-0963">Cytoplasm</keyword>
<keyword id="KW-0238">DNA-binding</keyword>
<keyword id="KW-0479">Metal-binding</keyword>
<keyword id="KW-0488">Methylation</keyword>
<keyword id="KW-0539">Nucleus</keyword>
<keyword id="KW-0675">Receptor</keyword>
<keyword id="KW-1185">Reference proteome</keyword>
<keyword id="KW-0804">Transcription</keyword>
<keyword id="KW-0805">Transcription regulation</keyword>
<keyword id="KW-0862">Zinc</keyword>
<keyword id="KW-0863">Zinc-finger</keyword>
<evidence type="ECO:0000250" key="1"/>
<evidence type="ECO:0000250" key="2">
    <source>
        <dbReference type="UniProtKB" id="P28702"/>
    </source>
</evidence>
<evidence type="ECO:0000255" key="3">
    <source>
        <dbReference type="PROSITE-ProRule" id="PRU00407"/>
    </source>
</evidence>
<evidence type="ECO:0000255" key="4">
    <source>
        <dbReference type="PROSITE-ProRule" id="PRU01189"/>
    </source>
</evidence>
<evidence type="ECO:0000256" key="5">
    <source>
        <dbReference type="SAM" id="MobiDB-lite"/>
    </source>
</evidence>
<evidence type="ECO:0000269" key="6">
    <source>
    </source>
</evidence>
<evidence type="ECO:0000269" key="7">
    <source>
    </source>
</evidence>
<evidence type="ECO:0000269" key="8">
    <source>
    </source>
</evidence>
<evidence type="ECO:0000269" key="9">
    <source>
    </source>
</evidence>
<evidence type="ECO:0000305" key="10"/>
<evidence type="ECO:0000305" key="11">
    <source>
    </source>
</evidence>
<sequence length="520" mass="55866">MSWATRPPFLPPRHAAGQCGPVGVRKEMHCGVASRWRRRRPWLDPAAAAAAAGEQQALEPEPGEAGRDGMGDSGRDSRSPDSSSPNPLSQGIRPSSPPGPPLTPSAPPPPMPPPPLGSPFPVISSSMGSPGLPPPAPPGFSGPVSSPQINSTVSLPGGGSGPPEDVKPPVLGVRGLHCPPPPGGPGAGKRLCAICGDRSSGKHYGVYSCEGCKGFFKRTIRKDLTYSCRDNKDCTVDKRQRNRCQYCRYQKCLATGMKREAVQEERQRGKDKDGDGDGAGGAPEEMPVDRILEAELAVEQKSDQGVEGPGATGGGGSSPNDPVTNICQAADKQLFTLVEWAKRIPHFSSLPLDDQVILLRAGWNELLIASFSHRSIDVRDGILLATGLHVHRNSAHSAGVGAIFDRVLTELVSKMRDMRMDKTELGCLRAIILFNPDAKGLSNPGEVEILREKVYASLETYCKQKYPEQQGRFAKLLLRLPALRSIGLKCLEHLFFFKLIGDTPIDTFLMEMLEAPHQLA</sequence>